<proteinExistence type="inferred from homology"/>
<dbReference type="EC" id="1.3.5.2"/>
<dbReference type="EMBL" id="AE001439">
    <property type="protein sequence ID" value="AAD05992.1"/>
    <property type="molecule type" value="Genomic_DNA"/>
</dbReference>
<dbReference type="PIR" id="E71935">
    <property type="entry name" value="E71935"/>
</dbReference>
<dbReference type="RefSeq" id="WP_000967238.1">
    <property type="nucleotide sequence ID" value="NC_000921.1"/>
</dbReference>
<dbReference type="SMR" id="Q9ZM11"/>
<dbReference type="KEGG" id="hpj:jhp_0412"/>
<dbReference type="PATRIC" id="fig|85963.30.peg.597"/>
<dbReference type="eggNOG" id="COG0167">
    <property type="taxonomic scope" value="Bacteria"/>
</dbReference>
<dbReference type="UniPathway" id="UPA00070">
    <property type="reaction ID" value="UER00946"/>
</dbReference>
<dbReference type="Proteomes" id="UP000000804">
    <property type="component" value="Chromosome"/>
</dbReference>
<dbReference type="GO" id="GO:0005737">
    <property type="term" value="C:cytoplasm"/>
    <property type="evidence" value="ECO:0007669"/>
    <property type="project" value="InterPro"/>
</dbReference>
<dbReference type="GO" id="GO:0005886">
    <property type="term" value="C:plasma membrane"/>
    <property type="evidence" value="ECO:0007669"/>
    <property type="project" value="UniProtKB-SubCell"/>
</dbReference>
<dbReference type="GO" id="GO:0106430">
    <property type="term" value="F:dihydroorotate dehydrogenase (quinone) activity"/>
    <property type="evidence" value="ECO:0007669"/>
    <property type="project" value="UniProtKB-EC"/>
</dbReference>
<dbReference type="GO" id="GO:0006207">
    <property type="term" value="P:'de novo' pyrimidine nucleobase biosynthetic process"/>
    <property type="evidence" value="ECO:0007669"/>
    <property type="project" value="InterPro"/>
</dbReference>
<dbReference type="GO" id="GO:0044205">
    <property type="term" value="P:'de novo' UMP biosynthetic process"/>
    <property type="evidence" value="ECO:0007669"/>
    <property type="project" value="UniProtKB-UniRule"/>
</dbReference>
<dbReference type="CDD" id="cd04738">
    <property type="entry name" value="DHOD_2_like"/>
    <property type="match status" value="1"/>
</dbReference>
<dbReference type="Gene3D" id="3.20.20.70">
    <property type="entry name" value="Aldolase class I"/>
    <property type="match status" value="1"/>
</dbReference>
<dbReference type="HAMAP" id="MF_00225">
    <property type="entry name" value="DHO_dh_type2"/>
    <property type="match status" value="1"/>
</dbReference>
<dbReference type="InterPro" id="IPR013785">
    <property type="entry name" value="Aldolase_TIM"/>
</dbReference>
<dbReference type="InterPro" id="IPR050074">
    <property type="entry name" value="DHO_dehydrogenase"/>
</dbReference>
<dbReference type="InterPro" id="IPR012135">
    <property type="entry name" value="Dihydroorotate_DH_1_2"/>
</dbReference>
<dbReference type="InterPro" id="IPR005719">
    <property type="entry name" value="Dihydroorotate_DH_2"/>
</dbReference>
<dbReference type="InterPro" id="IPR005720">
    <property type="entry name" value="Dihydroorotate_DH_cat"/>
</dbReference>
<dbReference type="InterPro" id="IPR001295">
    <property type="entry name" value="Dihydroorotate_DH_CS"/>
</dbReference>
<dbReference type="NCBIfam" id="NF003649">
    <property type="entry name" value="PRK05286.2-2"/>
    <property type="match status" value="1"/>
</dbReference>
<dbReference type="NCBIfam" id="NF003652">
    <property type="entry name" value="PRK05286.2-5"/>
    <property type="match status" value="1"/>
</dbReference>
<dbReference type="NCBIfam" id="TIGR01036">
    <property type="entry name" value="pyrD_sub2"/>
    <property type="match status" value="1"/>
</dbReference>
<dbReference type="PANTHER" id="PTHR48109:SF4">
    <property type="entry name" value="DIHYDROOROTATE DEHYDROGENASE (QUINONE), MITOCHONDRIAL"/>
    <property type="match status" value="1"/>
</dbReference>
<dbReference type="PANTHER" id="PTHR48109">
    <property type="entry name" value="DIHYDROOROTATE DEHYDROGENASE (QUINONE), MITOCHONDRIAL-RELATED"/>
    <property type="match status" value="1"/>
</dbReference>
<dbReference type="Pfam" id="PF01180">
    <property type="entry name" value="DHO_dh"/>
    <property type="match status" value="1"/>
</dbReference>
<dbReference type="PIRSF" id="PIRSF000164">
    <property type="entry name" value="DHO_oxidase"/>
    <property type="match status" value="1"/>
</dbReference>
<dbReference type="SUPFAM" id="SSF51395">
    <property type="entry name" value="FMN-linked oxidoreductases"/>
    <property type="match status" value="1"/>
</dbReference>
<dbReference type="PROSITE" id="PS00911">
    <property type="entry name" value="DHODEHASE_1"/>
    <property type="match status" value="1"/>
</dbReference>
<dbReference type="PROSITE" id="PS00912">
    <property type="entry name" value="DHODEHASE_2"/>
    <property type="match status" value="1"/>
</dbReference>
<protein>
    <recommendedName>
        <fullName>Dihydroorotate dehydrogenase (quinone)</fullName>
        <ecNumber>1.3.5.2</ecNumber>
    </recommendedName>
    <alternativeName>
        <fullName>DHOdehase</fullName>
        <shortName>DHOD</shortName>
        <shortName>DHODase</shortName>
    </alternativeName>
    <alternativeName>
        <fullName>Dihydroorotate oxidase</fullName>
    </alternativeName>
</protein>
<feature type="chain" id="PRO_0000148446" description="Dihydroorotate dehydrogenase (quinone)">
    <location>
        <begin position="1"/>
        <end position="351"/>
    </location>
</feature>
<feature type="active site" description="Nucleophile" evidence="1">
    <location>
        <position position="181"/>
    </location>
</feature>
<feature type="binding site" evidence="1">
    <location>
        <begin position="67"/>
        <end position="71"/>
    </location>
    <ligand>
        <name>FMN</name>
        <dbReference type="ChEBI" id="CHEBI:58210"/>
    </ligand>
</feature>
<feature type="binding site" evidence="1">
    <location>
        <position position="71"/>
    </location>
    <ligand>
        <name>substrate</name>
    </ligand>
</feature>
<feature type="binding site" evidence="1">
    <location>
        <position position="91"/>
    </location>
    <ligand>
        <name>FMN</name>
        <dbReference type="ChEBI" id="CHEBI:58210"/>
    </ligand>
</feature>
<feature type="binding site" evidence="1">
    <location>
        <begin position="116"/>
        <end position="120"/>
    </location>
    <ligand>
        <name>substrate</name>
    </ligand>
</feature>
<feature type="binding site" evidence="1">
    <location>
        <position position="145"/>
    </location>
    <ligand>
        <name>FMN</name>
        <dbReference type="ChEBI" id="CHEBI:58210"/>
    </ligand>
</feature>
<feature type="binding site" evidence="1">
    <location>
        <position position="178"/>
    </location>
    <ligand>
        <name>FMN</name>
        <dbReference type="ChEBI" id="CHEBI:58210"/>
    </ligand>
</feature>
<feature type="binding site" evidence="1">
    <location>
        <position position="178"/>
    </location>
    <ligand>
        <name>substrate</name>
    </ligand>
</feature>
<feature type="binding site" evidence="1">
    <location>
        <position position="183"/>
    </location>
    <ligand>
        <name>substrate</name>
    </ligand>
</feature>
<feature type="binding site" evidence="1">
    <location>
        <position position="214"/>
    </location>
    <ligand>
        <name>FMN</name>
        <dbReference type="ChEBI" id="CHEBI:58210"/>
    </ligand>
</feature>
<feature type="binding site" evidence="1">
    <location>
        <position position="242"/>
    </location>
    <ligand>
        <name>FMN</name>
        <dbReference type="ChEBI" id="CHEBI:58210"/>
    </ligand>
</feature>
<feature type="binding site" evidence="1">
    <location>
        <begin position="243"/>
        <end position="244"/>
    </location>
    <ligand>
        <name>substrate</name>
    </ligand>
</feature>
<feature type="binding site" evidence="1">
    <location>
        <position position="262"/>
    </location>
    <ligand>
        <name>FMN</name>
        <dbReference type="ChEBI" id="CHEBI:58210"/>
    </ligand>
</feature>
<feature type="binding site" evidence="1">
    <location>
        <position position="291"/>
    </location>
    <ligand>
        <name>FMN</name>
        <dbReference type="ChEBI" id="CHEBI:58210"/>
    </ligand>
</feature>
<feature type="binding site" evidence="1">
    <location>
        <begin position="312"/>
        <end position="313"/>
    </location>
    <ligand>
        <name>FMN</name>
        <dbReference type="ChEBI" id="CHEBI:58210"/>
    </ligand>
</feature>
<organism>
    <name type="scientific">Helicobacter pylori (strain J99 / ATCC 700824)</name>
    <name type="common">Campylobacter pylori J99</name>
    <dbReference type="NCBI Taxonomy" id="85963"/>
    <lineage>
        <taxon>Bacteria</taxon>
        <taxon>Pseudomonadati</taxon>
        <taxon>Campylobacterota</taxon>
        <taxon>Epsilonproteobacteria</taxon>
        <taxon>Campylobacterales</taxon>
        <taxon>Helicobacteraceae</taxon>
        <taxon>Helicobacter</taxon>
    </lineage>
</organism>
<accession>Q9ZM11</accession>
<sequence>MLYSLVKKYLFSLDAEIAHEKVCQILRTLSSSPFLCRLIHSQWGYKNPKLENEILGLNFPNPLGLAAGFDKNASMLRALIAFGFGYLEAGTLTNIAQSGNEKPRLFRHIEEESLQNAMGFNNYGAILGVRAFNRFAPYKTPIGINLGKNKHIEQAHALEDYQAVLNQCLNIGDYYTFNLSSPNTPNLRDLQNKVFVNELFCMAKEMTHKPLFLKIAPDLEIDSMLEVVNSAIEAGANGIIATNTTIDKSLVFAPKEMGGLSGKCLTKKSREIFKELAKAFFNKSVLVSVGGISDAKEAYERIKMGASLLQIYSAFIYKGPNLCQNILKDLVKLLQKDGFLSVKEAIGADLR</sequence>
<evidence type="ECO:0000250" key="1"/>
<evidence type="ECO:0000305" key="2"/>
<keyword id="KW-1003">Cell membrane</keyword>
<keyword id="KW-0285">Flavoprotein</keyword>
<keyword id="KW-0288">FMN</keyword>
<keyword id="KW-0472">Membrane</keyword>
<keyword id="KW-0560">Oxidoreductase</keyword>
<keyword id="KW-0665">Pyrimidine biosynthesis</keyword>
<name>PYRD_HELPJ</name>
<comment type="function">
    <text evidence="1">Catalyzes the conversion of dihydroorotate to orotate with quinone as electron acceptor.</text>
</comment>
<comment type="catalytic activity">
    <reaction>
        <text>(S)-dihydroorotate + a quinone = orotate + a quinol</text>
        <dbReference type="Rhea" id="RHEA:30187"/>
        <dbReference type="ChEBI" id="CHEBI:24646"/>
        <dbReference type="ChEBI" id="CHEBI:30839"/>
        <dbReference type="ChEBI" id="CHEBI:30864"/>
        <dbReference type="ChEBI" id="CHEBI:132124"/>
        <dbReference type="EC" id="1.3.5.2"/>
    </reaction>
</comment>
<comment type="cofactor">
    <cofactor evidence="1">
        <name>FMN</name>
        <dbReference type="ChEBI" id="CHEBI:58210"/>
    </cofactor>
    <text evidence="1">Binds 1 FMN per subunit.</text>
</comment>
<comment type="pathway">
    <text>Pyrimidine metabolism; UMP biosynthesis via de novo pathway; orotate from (S)-dihydroorotate (quinone route): step 1/1.</text>
</comment>
<comment type="subunit">
    <text evidence="1">Monomer.</text>
</comment>
<comment type="subcellular location">
    <subcellularLocation>
        <location evidence="1">Cell membrane</location>
        <topology evidence="1">Peripheral membrane protein</topology>
    </subcellularLocation>
</comment>
<comment type="similarity">
    <text evidence="2">Belongs to the dihydroorotate dehydrogenase family. Type 2 subfamily.</text>
</comment>
<reference key="1">
    <citation type="journal article" date="1999" name="Nature">
        <title>Genomic sequence comparison of two unrelated isolates of the human gastric pathogen Helicobacter pylori.</title>
        <authorList>
            <person name="Alm R.A."/>
            <person name="Ling L.-S.L."/>
            <person name="Moir D.T."/>
            <person name="King B.L."/>
            <person name="Brown E.D."/>
            <person name="Doig P.C."/>
            <person name="Smith D.R."/>
            <person name="Noonan B."/>
            <person name="Guild B.C."/>
            <person name="deJonge B.L."/>
            <person name="Carmel G."/>
            <person name="Tummino P.J."/>
            <person name="Caruso A."/>
            <person name="Uria-Nickelsen M."/>
            <person name="Mills D.M."/>
            <person name="Ives C."/>
            <person name="Gibson R."/>
            <person name="Merberg D."/>
            <person name="Mills S.D."/>
            <person name="Jiang Q."/>
            <person name="Taylor D.E."/>
            <person name="Vovis G.F."/>
            <person name="Trust T.J."/>
        </authorList>
    </citation>
    <scope>NUCLEOTIDE SEQUENCE [LARGE SCALE GENOMIC DNA]</scope>
    <source>
        <strain>J99 / ATCC 700824</strain>
    </source>
</reference>
<gene>
    <name type="primary">pyrD</name>
    <name type="ordered locus">jhp_0412</name>
</gene>